<feature type="chain" id="PRO_1000184687" description="ATP synthase subunit delta">
    <location>
        <begin position="1"/>
        <end position="185"/>
    </location>
</feature>
<protein>
    <recommendedName>
        <fullName evidence="1">ATP synthase subunit delta</fullName>
    </recommendedName>
    <alternativeName>
        <fullName evidence="1">ATP synthase F(1) sector subunit delta</fullName>
    </alternativeName>
    <alternativeName>
        <fullName evidence="1">F-type ATPase subunit delta</fullName>
        <shortName evidence="1">F-ATPase subunit delta</shortName>
    </alternativeName>
</protein>
<evidence type="ECO:0000255" key="1">
    <source>
        <dbReference type="HAMAP-Rule" id="MF_01416"/>
    </source>
</evidence>
<dbReference type="EMBL" id="CP000806">
    <property type="protein sequence ID" value="ACB53835.1"/>
    <property type="molecule type" value="Genomic_DNA"/>
</dbReference>
<dbReference type="RefSeq" id="WP_009543459.1">
    <property type="nucleotide sequence ID" value="NC_010546.1"/>
</dbReference>
<dbReference type="SMR" id="B1WUI1"/>
<dbReference type="STRING" id="43989.cce_4487"/>
<dbReference type="KEGG" id="cyt:cce_4487"/>
<dbReference type="eggNOG" id="COG0712">
    <property type="taxonomic scope" value="Bacteria"/>
</dbReference>
<dbReference type="HOGENOM" id="CLU_085114_4_0_3"/>
<dbReference type="OrthoDB" id="9802471at2"/>
<dbReference type="Proteomes" id="UP000001203">
    <property type="component" value="Chromosome circular"/>
</dbReference>
<dbReference type="GO" id="GO:0031676">
    <property type="term" value="C:plasma membrane-derived thylakoid membrane"/>
    <property type="evidence" value="ECO:0007669"/>
    <property type="project" value="UniProtKB-SubCell"/>
</dbReference>
<dbReference type="GO" id="GO:0045259">
    <property type="term" value="C:proton-transporting ATP synthase complex"/>
    <property type="evidence" value="ECO:0007669"/>
    <property type="project" value="UniProtKB-KW"/>
</dbReference>
<dbReference type="GO" id="GO:0046933">
    <property type="term" value="F:proton-transporting ATP synthase activity, rotational mechanism"/>
    <property type="evidence" value="ECO:0007669"/>
    <property type="project" value="UniProtKB-UniRule"/>
</dbReference>
<dbReference type="Gene3D" id="1.10.520.20">
    <property type="entry name" value="N-terminal domain of the delta subunit of the F1F0-ATP synthase"/>
    <property type="match status" value="1"/>
</dbReference>
<dbReference type="HAMAP" id="MF_01416">
    <property type="entry name" value="ATP_synth_delta_bact"/>
    <property type="match status" value="1"/>
</dbReference>
<dbReference type="InterPro" id="IPR026015">
    <property type="entry name" value="ATP_synth_OSCP/delta_N_sf"/>
</dbReference>
<dbReference type="InterPro" id="IPR020781">
    <property type="entry name" value="ATPase_OSCP/d_CS"/>
</dbReference>
<dbReference type="InterPro" id="IPR000711">
    <property type="entry name" value="ATPase_OSCP/dsu"/>
</dbReference>
<dbReference type="NCBIfam" id="TIGR01145">
    <property type="entry name" value="ATP_synt_delta"/>
    <property type="match status" value="1"/>
</dbReference>
<dbReference type="PANTHER" id="PTHR11910">
    <property type="entry name" value="ATP SYNTHASE DELTA CHAIN"/>
    <property type="match status" value="1"/>
</dbReference>
<dbReference type="Pfam" id="PF00213">
    <property type="entry name" value="OSCP"/>
    <property type="match status" value="1"/>
</dbReference>
<dbReference type="PRINTS" id="PR00125">
    <property type="entry name" value="ATPASEDELTA"/>
</dbReference>
<dbReference type="SUPFAM" id="SSF47928">
    <property type="entry name" value="N-terminal domain of the delta subunit of the F1F0-ATP synthase"/>
    <property type="match status" value="1"/>
</dbReference>
<dbReference type="PROSITE" id="PS00389">
    <property type="entry name" value="ATPASE_DELTA"/>
    <property type="match status" value="1"/>
</dbReference>
<organism>
    <name type="scientific">Crocosphaera subtropica (strain ATCC 51142 / BH68)</name>
    <name type="common">Cyanothece sp. (strain ATCC 51142)</name>
    <dbReference type="NCBI Taxonomy" id="43989"/>
    <lineage>
        <taxon>Bacteria</taxon>
        <taxon>Bacillati</taxon>
        <taxon>Cyanobacteriota</taxon>
        <taxon>Cyanophyceae</taxon>
        <taxon>Oscillatoriophycideae</taxon>
        <taxon>Chroococcales</taxon>
        <taxon>Aphanothecaceae</taxon>
        <taxon>Crocosphaera</taxon>
        <taxon>Crocosphaera subtropica</taxon>
    </lineage>
</organism>
<gene>
    <name evidence="1" type="primary">atpH</name>
    <name evidence="1" type="synonym">atpD</name>
    <name type="ordered locus">cce_4487</name>
</gene>
<sequence>MKGSLFSTEIAEPYAQALMSLAQSRDITRSIGEDCRSILDILEESAELREFISSPIIKDEDKRGVLNRLLGNDIHHYLRNFLMLLVDKRRIVFLQAICEQYLALLRKLTNTVLAEVTASTELSEGQRRDVIDKIKALTGAESVELKTDIDPDLIGGVIIKVGSQVFDASLRGQLRRISISLTGAS</sequence>
<reference key="1">
    <citation type="journal article" date="2008" name="Proc. Natl. Acad. Sci. U.S.A.">
        <title>The genome of Cyanothece 51142, a unicellular diazotrophic cyanobacterium important in the marine nitrogen cycle.</title>
        <authorList>
            <person name="Welsh E.A."/>
            <person name="Liberton M."/>
            <person name="Stoeckel J."/>
            <person name="Loh T."/>
            <person name="Elvitigala T."/>
            <person name="Wang C."/>
            <person name="Wollam A."/>
            <person name="Fulton R.S."/>
            <person name="Clifton S.W."/>
            <person name="Jacobs J.M."/>
            <person name="Aurora R."/>
            <person name="Ghosh B.K."/>
            <person name="Sherman L.A."/>
            <person name="Smith R.D."/>
            <person name="Wilson R.K."/>
            <person name="Pakrasi H.B."/>
        </authorList>
    </citation>
    <scope>NUCLEOTIDE SEQUENCE [LARGE SCALE GENOMIC DNA]</scope>
    <source>
        <strain>ATCC 51142 / BH68</strain>
    </source>
</reference>
<accession>B1WUI1</accession>
<comment type="function">
    <text evidence="1">F(1)F(0) ATP synthase produces ATP from ADP in the presence of a proton or sodium gradient. F-type ATPases consist of two structural domains, F(1) containing the extramembraneous catalytic core and F(0) containing the membrane proton channel, linked together by a central stalk and a peripheral stalk. During catalysis, ATP synthesis in the catalytic domain of F(1) is coupled via a rotary mechanism of the central stalk subunits to proton translocation.</text>
</comment>
<comment type="function">
    <text evidence="1">This protein is part of the stalk that links CF(0) to CF(1). It either transmits conformational changes from CF(0) to CF(1) or is implicated in proton conduction.</text>
</comment>
<comment type="subunit">
    <text evidence="1">F-type ATPases have 2 components, F(1) - the catalytic core - and F(0) - the membrane proton channel. F(1) has five subunits: alpha(3), beta(3), gamma(1), delta(1), epsilon(1). CF(0) has four main subunits: a(1), b(1), b'(1) and c(10-14). The alpha and beta chains form an alternating ring which encloses part of the gamma chain. F(1) is attached to F(0) by a central stalk formed by the gamma and epsilon chains, while a peripheral stalk is formed by the delta, b and b' chains.</text>
</comment>
<comment type="subcellular location">
    <subcellularLocation>
        <location evidence="1">Cellular thylakoid membrane</location>
        <topology evidence="1">Peripheral membrane protein</topology>
    </subcellularLocation>
</comment>
<comment type="similarity">
    <text evidence="1">Belongs to the ATPase delta chain family.</text>
</comment>
<name>ATPD_CROS5</name>
<keyword id="KW-0066">ATP synthesis</keyword>
<keyword id="KW-0139">CF(1)</keyword>
<keyword id="KW-0375">Hydrogen ion transport</keyword>
<keyword id="KW-0406">Ion transport</keyword>
<keyword id="KW-0472">Membrane</keyword>
<keyword id="KW-1185">Reference proteome</keyword>
<keyword id="KW-0793">Thylakoid</keyword>
<keyword id="KW-0813">Transport</keyword>
<proteinExistence type="inferred from homology"/>